<proteinExistence type="evidence at transcript level"/>
<sequence>MAFTGKYQLESHENFEAFMKAVGVPDDEVEKGKDIKSISEIHQDGKDFKVTVTAGTKVILYSFTVGEECELETFTGDRAKTVVQMDGNKLTAFVKGIESVTELDGDTISNTLSFNGIVYKRISRRIS</sequence>
<dbReference type="EMBL" id="DQ062095">
    <property type="protein sequence ID" value="AAZ08575.1"/>
    <property type="molecule type" value="mRNA"/>
</dbReference>
<dbReference type="EMBL" id="BC163809">
    <property type="protein sequence ID" value="AAI63809.1"/>
    <property type="molecule type" value="mRNA"/>
</dbReference>
<dbReference type="EMBL" id="BC163810">
    <property type="protein sequence ID" value="AAI63810.1"/>
    <property type="molecule type" value="mRNA"/>
</dbReference>
<dbReference type="RefSeq" id="NP_001038177.1">
    <property type="nucleotide sequence ID" value="NM_001044712.1"/>
</dbReference>
<dbReference type="SMR" id="Q1AMT3"/>
<dbReference type="FunCoup" id="Q1AMT3">
    <property type="interactions" value="906"/>
</dbReference>
<dbReference type="STRING" id="7955.ENSDARP00000003282"/>
<dbReference type="PaxDb" id="7955-ENSDARP00000003282"/>
<dbReference type="Ensembl" id="ENSDART00000006606">
    <property type="protein sequence ID" value="ENSDARP00000003282"/>
    <property type="gene ID" value="ENSDARG00000019357"/>
</dbReference>
<dbReference type="GeneID" id="791610"/>
<dbReference type="KEGG" id="dre:791610"/>
<dbReference type="AGR" id="ZFIN:ZDB-GENE-020318-3"/>
<dbReference type="CTD" id="791610"/>
<dbReference type="ZFIN" id="ZDB-GENE-020318-3">
    <property type="gene designation" value="fabp1a"/>
</dbReference>
<dbReference type="eggNOG" id="KOG4015">
    <property type="taxonomic scope" value="Eukaryota"/>
</dbReference>
<dbReference type="HOGENOM" id="CLU_113772_4_2_1"/>
<dbReference type="InParanoid" id="Q1AMT3"/>
<dbReference type="OMA" id="ESHDNFE"/>
<dbReference type="OrthoDB" id="9971011at2759"/>
<dbReference type="PhylomeDB" id="Q1AMT3"/>
<dbReference type="TreeFam" id="TF330348"/>
<dbReference type="PRO" id="PR:Q1AMT3"/>
<dbReference type="Proteomes" id="UP000000437">
    <property type="component" value="Chromosome 5"/>
</dbReference>
<dbReference type="Bgee" id="ENSDARG00000019357">
    <property type="expression patterns" value="Expressed in hepatocyte and 8 other cell types or tissues"/>
</dbReference>
<dbReference type="GO" id="GO:0005829">
    <property type="term" value="C:cytosol"/>
    <property type="evidence" value="ECO:0000318"/>
    <property type="project" value="GO_Central"/>
</dbReference>
<dbReference type="GO" id="GO:0005634">
    <property type="term" value="C:nucleus"/>
    <property type="evidence" value="ECO:0000318"/>
    <property type="project" value="GO_Central"/>
</dbReference>
<dbReference type="GO" id="GO:0005504">
    <property type="term" value="F:fatty acid binding"/>
    <property type="evidence" value="ECO:0000250"/>
    <property type="project" value="ZFIN"/>
</dbReference>
<dbReference type="GO" id="GO:0015908">
    <property type="term" value="P:fatty acid transport"/>
    <property type="evidence" value="ECO:0000318"/>
    <property type="project" value="GO_Central"/>
</dbReference>
<dbReference type="CDD" id="cd19444">
    <property type="entry name" value="FABP1"/>
    <property type="match status" value="1"/>
</dbReference>
<dbReference type="FunFam" id="2.40.128.20:FF:000006">
    <property type="entry name" value="Fatty acid-binding protein, liver"/>
    <property type="match status" value="1"/>
</dbReference>
<dbReference type="Gene3D" id="2.40.128.20">
    <property type="match status" value="1"/>
</dbReference>
<dbReference type="InterPro" id="IPR012674">
    <property type="entry name" value="Calycin"/>
</dbReference>
<dbReference type="InterPro" id="IPR000463">
    <property type="entry name" value="Fatty_acid-bd"/>
</dbReference>
<dbReference type="InterPro" id="IPR031259">
    <property type="entry name" value="ILBP"/>
</dbReference>
<dbReference type="PANTHER" id="PTHR11955">
    <property type="entry name" value="FATTY ACID BINDING PROTEIN"/>
    <property type="match status" value="1"/>
</dbReference>
<dbReference type="Pfam" id="PF14651">
    <property type="entry name" value="Lipocalin_7"/>
    <property type="match status" value="1"/>
</dbReference>
<dbReference type="PRINTS" id="PR00178">
    <property type="entry name" value="FATTYACIDBP"/>
</dbReference>
<dbReference type="SUPFAM" id="SSF50814">
    <property type="entry name" value="Lipocalins"/>
    <property type="match status" value="1"/>
</dbReference>
<dbReference type="PROSITE" id="PS00214">
    <property type="entry name" value="FABP"/>
    <property type="match status" value="1"/>
</dbReference>
<keyword id="KW-0963">Cytoplasm</keyword>
<keyword id="KW-0446">Lipid-binding</keyword>
<keyword id="KW-1185">Reference proteome</keyword>
<keyword id="KW-0813">Transport</keyword>
<accession>Q1AMT3</accession>
<gene>
    <name evidence="7" type="primary">fabp1a</name>
</gene>
<comment type="function">
    <text evidence="1">Binds free fatty acids and their coenzyme A derivatives, bilirubin, and some other small molecules in the cytoplasm. May be involved in intracellular lipid transport (By similarity).</text>
</comment>
<comment type="subcellular location">
    <subcellularLocation>
        <location evidence="1">Cytoplasm</location>
    </subcellularLocation>
</comment>
<comment type="tissue specificity">
    <text evidence="3">In adults, weakly expressed in the intestine.</text>
</comment>
<comment type="domain">
    <text evidence="1">Forms a beta-barrel structure that accommodates hydrophobic ligands in its interior.</text>
</comment>
<comment type="similarity">
    <text evidence="2">Belongs to the calycin superfamily. Fatty-acid binding protein (FABP) family.</text>
</comment>
<protein>
    <recommendedName>
        <fullName evidence="7">Fatty acid binding protein 1-A, liver</fullName>
    </recommendedName>
</protein>
<organism>
    <name type="scientific">Danio rerio</name>
    <name type="common">Zebrafish</name>
    <name type="synonym">Brachydanio rerio</name>
    <dbReference type="NCBI Taxonomy" id="7955"/>
    <lineage>
        <taxon>Eukaryota</taxon>
        <taxon>Metazoa</taxon>
        <taxon>Chordata</taxon>
        <taxon>Craniata</taxon>
        <taxon>Vertebrata</taxon>
        <taxon>Euteleostomi</taxon>
        <taxon>Actinopterygii</taxon>
        <taxon>Neopterygii</taxon>
        <taxon>Teleostei</taxon>
        <taxon>Ostariophysi</taxon>
        <taxon>Cypriniformes</taxon>
        <taxon>Danionidae</taxon>
        <taxon>Danioninae</taxon>
        <taxon>Danio</taxon>
    </lineage>
</organism>
<evidence type="ECO:0000250" key="1">
    <source>
        <dbReference type="UniProtKB" id="P07148"/>
    </source>
</evidence>
<evidence type="ECO:0000255" key="2"/>
<evidence type="ECO:0000269" key="3">
    <source>
    </source>
</evidence>
<evidence type="ECO:0000305" key="4"/>
<evidence type="ECO:0000312" key="5">
    <source>
        <dbReference type="EMBL" id="AAI63809.1"/>
    </source>
</evidence>
<evidence type="ECO:0000312" key="6">
    <source>
        <dbReference type="EMBL" id="AAZ08575.1"/>
    </source>
</evidence>
<evidence type="ECO:0000312" key="7">
    <source>
        <dbReference type="ZFIN" id="ZDB-GENE-020318-3"/>
    </source>
</evidence>
<name>FAB1A_DANRE</name>
<feature type="chain" id="PRO_0000397922" description="Fatty acid binding protein 1-A, liver">
    <location>
        <begin position="1"/>
        <end position="127"/>
    </location>
</feature>
<reference evidence="4 6" key="1">
    <citation type="journal article" date="2006" name="FEBS J.">
        <title>Hierarchical subfunctionalization of fabp1a, fabp1b and fabp10 tissue-specific expression may account for retention of these duplicated genes in the zebrafish (Danio rerio) genome.</title>
        <authorList>
            <person name="Sharma M.K."/>
            <person name="Liu R.Z."/>
            <person name="Thisse C."/>
            <person name="Thisse B."/>
            <person name="Denovan-Wright E.M."/>
            <person name="Wright J.M."/>
        </authorList>
    </citation>
    <scope>NUCLEOTIDE SEQUENCE [MRNA]</scope>
    <scope>TISSUE SPECIFICITY</scope>
</reference>
<reference evidence="5" key="2">
    <citation type="submission" date="2008-04" db="EMBL/GenBank/DDBJ databases">
        <authorList>
            <consortium name="NIH - Zebrafish Gene Collection (ZGC) project"/>
        </authorList>
    </citation>
    <scope>NUCLEOTIDE SEQUENCE [LARGE SCALE MRNA]</scope>
</reference>